<organism>
    <name type="scientific">Rattus norvegicus</name>
    <name type="common">Rat</name>
    <dbReference type="NCBI Taxonomy" id="10116"/>
    <lineage>
        <taxon>Eukaryota</taxon>
        <taxon>Metazoa</taxon>
        <taxon>Chordata</taxon>
        <taxon>Craniata</taxon>
        <taxon>Vertebrata</taxon>
        <taxon>Euteleostomi</taxon>
        <taxon>Mammalia</taxon>
        <taxon>Eutheria</taxon>
        <taxon>Euarchontoglires</taxon>
        <taxon>Glires</taxon>
        <taxon>Rodentia</taxon>
        <taxon>Myomorpha</taxon>
        <taxon>Muroidea</taxon>
        <taxon>Muridae</taxon>
        <taxon>Murinae</taxon>
        <taxon>Rattus</taxon>
    </lineage>
</organism>
<protein>
    <recommendedName>
        <fullName evidence="7">F-box only protein 31</fullName>
    </recommendedName>
</protein>
<sequence length="507" mass="57399">MAVCARLCGVGPARGCRRRQQRRGPAETAAADSEADTDPEEERIEAGPARCSLLELPPELLVEIFASLPGTDLPSLAQVCSRFRRILHTDTIWRRRCREEYGVCENLRKLEITGVSCRDVYAKLLHRYRHILGLWQPDIGPYGGLLNVVVDGLFIIGWMYLPPHDPHVGDPMRFKPLFRIHLMERKSATVECMYGHKGPHNGHIQIVKRDEFSTKCNQTDHHRMSGGRQEEFRTWLREEWGRTLEDIFHEHMQELILMKFIYTSQYDNCLTYRRIYLPPSHPDDLIKPGLFKGTYGSHGLEIVMLSFHGSRARGTKITGDPNIPAGQQTVEIDLQRRIQLPDVENLRNFNELSRIVLEVREQVRQEQEAGEGPAPHREPAVKDPEGPPAKASKEAGPGAEAAEQSSTSGQGQPFVLPAGVSSRNEDYPRTCRLCFYGTGLIAGHGFTSPERTPGVFVLFDEDRFGFLWLELKSFSLYSRVQATFQNADAPSPQAFDEMLRNIQSLTS</sequence>
<gene>
    <name evidence="6 8" type="primary">Fbxo31</name>
</gene>
<accession>B2RYN2</accession>
<dbReference type="EMBL" id="BC166840">
    <property type="protein sequence ID" value="AAI66840.1"/>
    <property type="molecule type" value="mRNA"/>
</dbReference>
<dbReference type="RefSeq" id="NP_001037724.2">
    <property type="nucleotide sequence ID" value="NM_001044259.3"/>
</dbReference>
<dbReference type="SMR" id="B2RYN2"/>
<dbReference type="FunCoup" id="B2RYN2">
    <property type="interactions" value="198"/>
</dbReference>
<dbReference type="STRING" id="10116.ENSRNOP00000063581"/>
<dbReference type="iPTMnet" id="B2RYN2"/>
<dbReference type="PhosphoSitePlus" id="B2RYN2"/>
<dbReference type="PaxDb" id="10116-ENSRNOP00000063581"/>
<dbReference type="PeptideAtlas" id="B2RYN2"/>
<dbReference type="Ensembl" id="ENSRNOT00000068764.4">
    <property type="protein sequence ID" value="ENSRNOP00000063581.2"/>
    <property type="gene ID" value="ENSRNOG00000042274.5"/>
</dbReference>
<dbReference type="GeneID" id="498959"/>
<dbReference type="KEGG" id="rno:498959"/>
<dbReference type="UCSC" id="RGD:1561069">
    <property type="organism name" value="rat"/>
</dbReference>
<dbReference type="AGR" id="RGD:1561069"/>
<dbReference type="CTD" id="79791"/>
<dbReference type="RGD" id="1561069">
    <property type="gene designation" value="Fbxo31"/>
</dbReference>
<dbReference type="eggNOG" id="ENOG502QR2A">
    <property type="taxonomic scope" value="Eukaryota"/>
</dbReference>
<dbReference type="GeneTree" id="ENSGT00390000001368"/>
<dbReference type="HOGENOM" id="CLU_035961_0_0_1"/>
<dbReference type="InParanoid" id="B2RYN2"/>
<dbReference type="PhylomeDB" id="B2RYN2"/>
<dbReference type="Reactome" id="R-RNO-8951664">
    <property type="pathway name" value="Neddylation"/>
</dbReference>
<dbReference type="Reactome" id="R-RNO-983168">
    <property type="pathway name" value="Antigen processing: Ubiquitination &amp; Proteasome degradation"/>
</dbReference>
<dbReference type="UniPathway" id="UPA00143"/>
<dbReference type="PRO" id="PR:B2RYN2"/>
<dbReference type="Proteomes" id="UP000002494">
    <property type="component" value="Chromosome 19"/>
</dbReference>
<dbReference type="Bgee" id="ENSRNOG00000042274">
    <property type="expression patterns" value="Expressed in skeletal muscle tissue and 19 other cell types or tissues"/>
</dbReference>
<dbReference type="ExpressionAtlas" id="B2RYN2">
    <property type="expression patterns" value="baseline and differential"/>
</dbReference>
<dbReference type="GO" id="GO:0005813">
    <property type="term" value="C:centrosome"/>
    <property type="evidence" value="ECO:0000314"/>
    <property type="project" value="CACAO"/>
</dbReference>
<dbReference type="GO" id="GO:0005737">
    <property type="term" value="C:cytoplasm"/>
    <property type="evidence" value="ECO:0000250"/>
    <property type="project" value="UniProtKB"/>
</dbReference>
<dbReference type="GO" id="GO:0043025">
    <property type="term" value="C:neuronal cell body"/>
    <property type="evidence" value="ECO:0000250"/>
    <property type="project" value="UniProtKB"/>
</dbReference>
<dbReference type="GO" id="GO:0019005">
    <property type="term" value="C:SCF ubiquitin ligase complex"/>
    <property type="evidence" value="ECO:0000250"/>
    <property type="project" value="UniProtKB"/>
</dbReference>
<dbReference type="GO" id="GO:0030332">
    <property type="term" value="F:cyclin binding"/>
    <property type="evidence" value="ECO:0000266"/>
    <property type="project" value="RGD"/>
</dbReference>
<dbReference type="GO" id="GO:1990756">
    <property type="term" value="F:ubiquitin-like ligase-substrate adaptor activity"/>
    <property type="evidence" value="ECO:0000250"/>
    <property type="project" value="UniProtKB"/>
</dbReference>
<dbReference type="GO" id="GO:0031145">
    <property type="term" value="P:anaphase-promoting complex-dependent catabolic process"/>
    <property type="evidence" value="ECO:0000250"/>
    <property type="project" value="UniProtKB"/>
</dbReference>
<dbReference type="GO" id="GO:0034599">
    <property type="term" value="P:cellular response to oxidative stress"/>
    <property type="evidence" value="ECO:0000250"/>
    <property type="project" value="UniProtKB"/>
</dbReference>
<dbReference type="GO" id="GO:0006974">
    <property type="term" value="P:DNA damage response"/>
    <property type="evidence" value="ECO:0000250"/>
    <property type="project" value="UniProtKB"/>
</dbReference>
<dbReference type="GO" id="GO:0031571">
    <property type="term" value="P:mitotic G1 DNA damage checkpoint signaling"/>
    <property type="evidence" value="ECO:0000250"/>
    <property type="project" value="UniProtKB"/>
</dbReference>
<dbReference type="GO" id="GO:0050775">
    <property type="term" value="P:positive regulation of dendrite morphogenesis"/>
    <property type="evidence" value="ECO:0000315"/>
    <property type="project" value="CACAO"/>
</dbReference>
<dbReference type="GO" id="GO:2001224">
    <property type="term" value="P:positive regulation of neuron migration"/>
    <property type="evidence" value="ECO:0000315"/>
    <property type="project" value="CACAO"/>
</dbReference>
<dbReference type="GO" id="GO:0043161">
    <property type="term" value="P:proteasome-mediated ubiquitin-dependent protein catabolic process"/>
    <property type="evidence" value="ECO:0000250"/>
    <property type="project" value="UniProtKB"/>
</dbReference>
<dbReference type="GO" id="GO:0016567">
    <property type="term" value="P:protein ubiquitination"/>
    <property type="evidence" value="ECO:0007669"/>
    <property type="project" value="UniProtKB-UniPathway"/>
</dbReference>
<dbReference type="GO" id="GO:0031146">
    <property type="term" value="P:SCF-dependent proteasomal ubiquitin-dependent protein catabolic process"/>
    <property type="evidence" value="ECO:0000250"/>
    <property type="project" value="UniProtKB"/>
</dbReference>
<dbReference type="FunFam" id="1.20.1280.50:FF:000033">
    <property type="entry name" value="F-box only protein 31"/>
    <property type="match status" value="1"/>
</dbReference>
<dbReference type="Gene3D" id="1.20.1280.50">
    <property type="match status" value="1"/>
</dbReference>
<dbReference type="InterPro" id="IPR036047">
    <property type="entry name" value="F-box-like_dom_sf"/>
</dbReference>
<dbReference type="InterPro" id="IPR001810">
    <property type="entry name" value="F-box_dom"/>
</dbReference>
<dbReference type="InterPro" id="IPR045048">
    <property type="entry name" value="FBXO31/39"/>
</dbReference>
<dbReference type="PANTHER" id="PTHR10706">
    <property type="entry name" value="F-BOX FAMILY PROTEIN"/>
    <property type="match status" value="1"/>
</dbReference>
<dbReference type="PANTHER" id="PTHR10706:SF130">
    <property type="entry name" value="F-BOX ONLY PROTEIN 31"/>
    <property type="match status" value="1"/>
</dbReference>
<dbReference type="Pfam" id="PF12014">
    <property type="entry name" value="Cyclin_D1_bind"/>
    <property type="match status" value="1"/>
</dbReference>
<dbReference type="Pfam" id="PF12937">
    <property type="entry name" value="F-box-like"/>
    <property type="match status" value="1"/>
</dbReference>
<dbReference type="SMART" id="SM00256">
    <property type="entry name" value="FBOX"/>
    <property type="match status" value="1"/>
</dbReference>
<dbReference type="SUPFAM" id="SSF81383">
    <property type="entry name" value="F-box domain"/>
    <property type="match status" value="1"/>
</dbReference>
<dbReference type="PROSITE" id="PS50181">
    <property type="entry name" value="FBOX"/>
    <property type="match status" value="1"/>
</dbReference>
<evidence type="ECO:0000250" key="1">
    <source>
        <dbReference type="UniProtKB" id="Q3TQF0"/>
    </source>
</evidence>
<evidence type="ECO:0000250" key="2">
    <source>
        <dbReference type="UniProtKB" id="Q5XUX0"/>
    </source>
</evidence>
<evidence type="ECO:0000255" key="3">
    <source>
        <dbReference type="PROSITE-ProRule" id="PRU00080"/>
    </source>
</evidence>
<evidence type="ECO:0000256" key="4">
    <source>
        <dbReference type="SAM" id="MobiDB-lite"/>
    </source>
</evidence>
<evidence type="ECO:0000269" key="5">
    <source>
    </source>
</evidence>
<evidence type="ECO:0000303" key="6">
    <source>
    </source>
</evidence>
<evidence type="ECO:0000305" key="7"/>
<evidence type="ECO:0000312" key="8">
    <source>
        <dbReference type="RGD" id="1561069"/>
    </source>
</evidence>
<evidence type="ECO:0007744" key="9">
    <source>
    </source>
</evidence>
<comment type="function">
    <text evidence="1 2">Substrate-recognition component of the SCF(FBXO31) protein ligase complex, which specifically mediates the ubiquitination of proteins amidated at their C-terminus in response to oxidative stress, leading to their degradation by the proteasome. FBXO31 specifically recognizes and binds C-terminal peptides bearing an amide: C-terminal amidation in response to oxidative stress takes place following protein fragmentation. The SCF(FBXO31) also plays a role in G1 arrest following DNA damage by mediating ubiquitination of phosphorylated cyclin-D1 (CCND1), promoting its degradation by the proteasome, resulting in G1 arrest (By similarity). The SCF(FBXO31) complex is however not a major regulator of CCND1 stability during the G1/S transition (By similarity). In response to genotoxic stress, the SCF(FBXO31) complex directs ubiquitination and degradation of phosphorylated MDM2, thereby promoting p53/TP53-mediated DNA damage response. SCF(FBXO31) complex is required for genomic integrity by catalyzing ubiquitination and degradation of cyclin-A (CCNA1 and/or CCNA2) during the G1 phase. In response to genotoxic stress, the SCF(FBXO31) complex directs ubiquitination and degradation of phosphorylated FBXO46 and MAP2K6. SCF(FBXO31) complex promotes ubiquitination and degradation of CDT1 during the G2 phase to prevent re-replication. The SCF(FBXO31) complex also mediates ubiquitination and degradation of DUSP6, OGT and PARD6A (By similarity).</text>
</comment>
<comment type="pathway">
    <text evidence="2">Protein modification; protein ubiquitination.</text>
</comment>
<comment type="subunit">
    <text evidence="2">Part of a SCF (SKP1-cullin-F-box) protein ligase complex SCF(FBXO31) composed of CUL1, SKP1, RBX1 and FBXO31. Interacts (when phosphorylated at Ser-33) with CDC20, promoting ubiquitination by the APC/C complex.</text>
</comment>
<comment type="subcellular location">
    <subcellularLocation>
        <location evidence="2">Cytoplasm</location>
    </subcellularLocation>
    <subcellularLocation>
        <location evidence="5">Cytoplasm</location>
        <location evidence="5">Cytoskeleton</location>
        <location evidence="5">Microtubule organizing center</location>
        <location evidence="5">Centrosome</location>
    </subcellularLocation>
</comment>
<comment type="domain">
    <text evidence="2">Zinc-binding is required for the structure of the protein and facilitate folding.</text>
</comment>
<comment type="domain">
    <text evidence="2">The destruction box (D box) acts as a recognition signal for CDC20 for degradation by the APC/C complex.</text>
</comment>
<comment type="domain">
    <text evidence="2">The DDL motif is required for the interation with cyclin-A (CCNA1 and/or CCNA2).</text>
</comment>
<comment type="PTM">
    <text evidence="2">Phosphorylation at Ser-264 by ATM following gamma-irradiation results in its stabilization. Phosphorylation at Ser-448 in absence of stress promotes its ubiquitination and degradation by the SCF(FBXO46) complex. Phosphorylation at Ser-33 by AKT1 promotes association with CDC20 and ubiquitination by the APC/C complex.</text>
</comment>
<comment type="PTM">
    <text evidence="2">Ubiquitinated by the SCF(FBXO46) complex in absence of stress, promoting its degradation. Ubiquitinated by the APC/C complex following phosphorylation at Ser-33, leading to its degradation by the proteasome.</text>
</comment>
<comment type="similarity">
    <text evidence="7">Belongs to the FBXO31 family.</text>
</comment>
<feature type="chain" id="PRO_0000349261" description="F-box only protein 31">
    <location>
        <begin position="1"/>
        <end position="507"/>
    </location>
</feature>
<feature type="domain" description="F-box" evidence="3">
    <location>
        <begin position="50"/>
        <end position="96"/>
    </location>
</feature>
<feature type="region of interest" description="Disordered" evidence="4">
    <location>
        <begin position="19"/>
        <end position="42"/>
    </location>
</feature>
<feature type="region of interest" description="Disordered" evidence="4">
    <location>
        <begin position="364"/>
        <end position="421"/>
    </location>
</feature>
<feature type="short sequence motif" description="D box" evidence="2">
    <location>
        <begin position="50"/>
        <end position="55"/>
    </location>
</feature>
<feature type="short sequence motif" description="DDL motif" evidence="2">
    <location>
        <begin position="283"/>
        <end position="285"/>
    </location>
</feature>
<feature type="compositionally biased region" description="Acidic residues" evidence="4">
    <location>
        <begin position="33"/>
        <end position="42"/>
    </location>
</feature>
<feature type="compositionally biased region" description="Basic and acidic residues" evidence="4">
    <location>
        <begin position="374"/>
        <end position="385"/>
    </location>
</feature>
<feature type="binding site" evidence="2">
    <location>
        <position position="192"/>
    </location>
    <ligand>
        <name>Zn(2+)</name>
        <dbReference type="ChEBI" id="CHEBI:29105"/>
    </ligand>
</feature>
<feature type="binding site" evidence="2">
    <location>
        <position position="200"/>
    </location>
    <ligand>
        <name>Zn(2+)</name>
        <dbReference type="ChEBI" id="CHEBI:29105"/>
    </ligand>
</feature>
<feature type="binding site" evidence="2">
    <location>
        <position position="216"/>
    </location>
    <ligand>
        <name>Zn(2+)</name>
        <dbReference type="ChEBI" id="CHEBI:29105"/>
    </ligand>
</feature>
<feature type="binding site" evidence="2">
    <location>
        <position position="222"/>
    </location>
    <ligand>
        <name>Zn(2+)</name>
        <dbReference type="ChEBI" id="CHEBI:29105"/>
    </ligand>
</feature>
<feature type="modified residue" description="Phosphoserine" evidence="9">
    <location>
        <position position="33"/>
    </location>
</feature>
<feature type="modified residue" description="Phosphothreonine" evidence="9">
    <location>
        <position position="37"/>
    </location>
</feature>
<feature type="modified residue" description="Phosphoserine; by ATM" evidence="2">
    <location>
        <position position="264"/>
    </location>
</feature>
<feature type="modified residue" description="Phosphoserine" evidence="2">
    <location>
        <position position="448"/>
    </location>
</feature>
<reference key="1">
    <citation type="journal article" date="2004" name="Genome Res.">
        <title>The status, quality, and expansion of the NIH full-length cDNA project: the Mammalian Gene Collection (MGC).</title>
        <authorList>
            <consortium name="The MGC Project Team"/>
        </authorList>
    </citation>
    <scope>NUCLEOTIDE SEQUENCE [LARGE SCALE MRNA]</scope>
    <source>
        <tissue>Lung</tissue>
    </source>
</reference>
<reference key="2">
    <citation type="journal article" date="2012" name="Nat. Commun.">
        <title>Quantitative maps of protein phosphorylation sites across 14 different rat organs and tissues.</title>
        <authorList>
            <person name="Lundby A."/>
            <person name="Secher A."/>
            <person name="Lage K."/>
            <person name="Nordsborg N.B."/>
            <person name="Dmytriyev A."/>
            <person name="Lundby C."/>
            <person name="Olsen J.V."/>
        </authorList>
    </citation>
    <scope>PHOSPHORYLATION [LARGE SCALE ANALYSIS] AT SER-33 AND THR-37</scope>
    <scope>IDENTIFICATION BY MASS SPECTROMETRY [LARGE SCALE ANALYSIS]</scope>
</reference>
<reference key="3">
    <citation type="journal article" date="2013" name="PLoS ONE">
        <title>The centrosomal E3 ubiquitin ligase FBXO31-SCF regulates neuronal morphogenesis and migration.</title>
        <authorList>
            <person name="Vadhvani M."/>
            <person name="Schwedhelm-Domeyer N."/>
            <person name="Mukherjee C."/>
            <person name="Stegmueller J."/>
        </authorList>
    </citation>
    <scope>SUBCELLULAR LOCATION</scope>
</reference>
<keyword id="KW-0131">Cell cycle</keyword>
<keyword id="KW-0963">Cytoplasm</keyword>
<keyword id="KW-0206">Cytoskeleton</keyword>
<keyword id="KW-0227">DNA damage</keyword>
<keyword id="KW-0479">Metal-binding</keyword>
<keyword id="KW-0597">Phosphoprotein</keyword>
<keyword id="KW-1185">Reference proteome</keyword>
<keyword id="KW-0832">Ubl conjugation</keyword>
<keyword id="KW-0833">Ubl conjugation pathway</keyword>
<keyword id="KW-0862">Zinc</keyword>
<name>FBX31_RAT</name>
<proteinExistence type="evidence at protein level"/>